<comment type="function">
    <text evidence="1">Catalyzes the decarboxylation of four acetate groups of uroporphyrinogen-III to yield coproporphyrinogen-III.</text>
</comment>
<comment type="catalytic activity">
    <reaction evidence="1">
        <text>uroporphyrinogen III + 4 H(+) = coproporphyrinogen III + 4 CO2</text>
        <dbReference type="Rhea" id="RHEA:19865"/>
        <dbReference type="ChEBI" id="CHEBI:15378"/>
        <dbReference type="ChEBI" id="CHEBI:16526"/>
        <dbReference type="ChEBI" id="CHEBI:57308"/>
        <dbReference type="ChEBI" id="CHEBI:57309"/>
        <dbReference type="EC" id="4.1.1.37"/>
    </reaction>
</comment>
<comment type="pathway">
    <text evidence="1">Porphyrin-containing compound metabolism; protoporphyrin-IX biosynthesis; coproporphyrinogen-III from 5-aminolevulinate: step 4/4.</text>
</comment>
<comment type="subunit">
    <text evidence="1">Homodimer.</text>
</comment>
<comment type="subcellular location">
    <subcellularLocation>
        <location evidence="1">Cytoplasm</location>
    </subcellularLocation>
</comment>
<comment type="similarity">
    <text evidence="1">Belongs to the uroporphyrinogen decarboxylase family.</text>
</comment>
<accession>B6I5K8</accession>
<reference key="1">
    <citation type="journal article" date="2008" name="DNA Res.">
        <title>Complete genome sequence and comparative analysis of the wild-type commensal Escherichia coli strain SE11 isolated from a healthy adult.</title>
        <authorList>
            <person name="Oshima K."/>
            <person name="Toh H."/>
            <person name="Ogura Y."/>
            <person name="Sasamoto H."/>
            <person name="Morita H."/>
            <person name="Park S.-H."/>
            <person name="Ooka T."/>
            <person name="Iyoda S."/>
            <person name="Taylor T.D."/>
            <person name="Hayashi T."/>
            <person name="Itoh K."/>
            <person name="Hattori M."/>
        </authorList>
    </citation>
    <scope>NUCLEOTIDE SEQUENCE [LARGE SCALE GENOMIC DNA]</scope>
    <source>
        <strain>SE11</strain>
    </source>
</reference>
<protein>
    <recommendedName>
        <fullName evidence="1">Uroporphyrinogen decarboxylase</fullName>
        <shortName evidence="1">UPD</shortName>
        <shortName evidence="1">URO-D</shortName>
        <ecNumber evidence="1">4.1.1.37</ecNumber>
    </recommendedName>
</protein>
<sequence length="354" mass="39248">MTELKNDRYLRALLRQPVDVTPVWMMRQAGRYLPEYKATRAQAGDFMSLCKNAELACEVTLQPLRRYPLDAAILFSDILTVPDAMGLGLYFEAGEGPRFTSPVTCKADVDKLPIPDPEDELGYVMNAVRTIRRELKGEVPLIGFSGSPWTLATYMVEGGSSKAFTVIKKMMYADPQALHALLDKLAKSVTLYLNAQIKAGAQAVMIFDTWGGVLTGRDYQQFSLYYMHKIVDGLLRENDGRRVPVTLFTKGGGQWLEAMAETGCDALGLDWTTDIADARRRVGNKVALQGNMDPSMLYAPPARIEEEVATILAGFGHGEGHVFNLGHGIHQDVPPEHAGVFVEAVHRLSEQYHR</sequence>
<dbReference type="EC" id="4.1.1.37" evidence="1"/>
<dbReference type="EMBL" id="AP009240">
    <property type="protein sequence ID" value="BAG79809.1"/>
    <property type="molecule type" value="Genomic_DNA"/>
</dbReference>
<dbReference type="RefSeq" id="WP_000137657.1">
    <property type="nucleotide sequence ID" value="NC_011415.1"/>
</dbReference>
<dbReference type="SMR" id="B6I5K8"/>
<dbReference type="GeneID" id="93777897"/>
<dbReference type="KEGG" id="ecy:ECSE_4285"/>
<dbReference type="HOGENOM" id="CLU_040933_0_0_6"/>
<dbReference type="UniPathway" id="UPA00251">
    <property type="reaction ID" value="UER00321"/>
</dbReference>
<dbReference type="Proteomes" id="UP000008199">
    <property type="component" value="Chromosome"/>
</dbReference>
<dbReference type="GO" id="GO:0005829">
    <property type="term" value="C:cytosol"/>
    <property type="evidence" value="ECO:0007669"/>
    <property type="project" value="TreeGrafter"/>
</dbReference>
<dbReference type="GO" id="GO:0004853">
    <property type="term" value="F:uroporphyrinogen decarboxylase activity"/>
    <property type="evidence" value="ECO:0007669"/>
    <property type="project" value="UniProtKB-UniRule"/>
</dbReference>
<dbReference type="GO" id="GO:0019353">
    <property type="term" value="P:protoporphyrinogen IX biosynthetic process from glutamate"/>
    <property type="evidence" value="ECO:0007669"/>
    <property type="project" value="TreeGrafter"/>
</dbReference>
<dbReference type="CDD" id="cd00717">
    <property type="entry name" value="URO-D"/>
    <property type="match status" value="1"/>
</dbReference>
<dbReference type="FunFam" id="3.20.20.210:FF:000001">
    <property type="entry name" value="Uroporphyrinogen decarboxylase"/>
    <property type="match status" value="1"/>
</dbReference>
<dbReference type="Gene3D" id="3.20.20.210">
    <property type="match status" value="1"/>
</dbReference>
<dbReference type="HAMAP" id="MF_00218">
    <property type="entry name" value="URO_D"/>
    <property type="match status" value="1"/>
</dbReference>
<dbReference type="InterPro" id="IPR038071">
    <property type="entry name" value="UROD/MetE-like_sf"/>
</dbReference>
<dbReference type="InterPro" id="IPR006361">
    <property type="entry name" value="Uroporphyrinogen_deCO2ase_HemE"/>
</dbReference>
<dbReference type="InterPro" id="IPR000257">
    <property type="entry name" value="Uroporphyrinogen_deCOase"/>
</dbReference>
<dbReference type="NCBIfam" id="TIGR01464">
    <property type="entry name" value="hemE"/>
    <property type="match status" value="1"/>
</dbReference>
<dbReference type="PANTHER" id="PTHR21091">
    <property type="entry name" value="METHYLTETRAHYDROFOLATE:HOMOCYSTEINE METHYLTRANSFERASE RELATED"/>
    <property type="match status" value="1"/>
</dbReference>
<dbReference type="PANTHER" id="PTHR21091:SF169">
    <property type="entry name" value="UROPORPHYRINOGEN DECARBOXYLASE"/>
    <property type="match status" value="1"/>
</dbReference>
<dbReference type="Pfam" id="PF01208">
    <property type="entry name" value="URO-D"/>
    <property type="match status" value="1"/>
</dbReference>
<dbReference type="SUPFAM" id="SSF51726">
    <property type="entry name" value="UROD/MetE-like"/>
    <property type="match status" value="1"/>
</dbReference>
<dbReference type="PROSITE" id="PS00906">
    <property type="entry name" value="UROD_1"/>
    <property type="match status" value="1"/>
</dbReference>
<dbReference type="PROSITE" id="PS00907">
    <property type="entry name" value="UROD_2"/>
    <property type="match status" value="1"/>
</dbReference>
<name>DCUP_ECOSE</name>
<feature type="chain" id="PRO_1000099991" description="Uroporphyrinogen decarboxylase">
    <location>
        <begin position="1"/>
        <end position="354"/>
    </location>
</feature>
<feature type="binding site" evidence="1">
    <location>
        <begin position="27"/>
        <end position="31"/>
    </location>
    <ligand>
        <name>substrate</name>
    </ligand>
</feature>
<feature type="binding site" evidence="1">
    <location>
        <position position="77"/>
    </location>
    <ligand>
        <name>substrate</name>
    </ligand>
</feature>
<feature type="binding site" evidence="1">
    <location>
        <position position="154"/>
    </location>
    <ligand>
        <name>substrate</name>
    </ligand>
</feature>
<feature type="binding site" evidence="1">
    <location>
        <position position="209"/>
    </location>
    <ligand>
        <name>substrate</name>
    </ligand>
</feature>
<feature type="binding site" evidence="1">
    <location>
        <position position="327"/>
    </location>
    <ligand>
        <name>substrate</name>
    </ligand>
</feature>
<feature type="site" description="Transition state stabilizer" evidence="1">
    <location>
        <position position="77"/>
    </location>
</feature>
<proteinExistence type="inferred from homology"/>
<organism>
    <name type="scientific">Escherichia coli (strain SE11)</name>
    <dbReference type="NCBI Taxonomy" id="409438"/>
    <lineage>
        <taxon>Bacteria</taxon>
        <taxon>Pseudomonadati</taxon>
        <taxon>Pseudomonadota</taxon>
        <taxon>Gammaproteobacteria</taxon>
        <taxon>Enterobacterales</taxon>
        <taxon>Enterobacteriaceae</taxon>
        <taxon>Escherichia</taxon>
    </lineage>
</organism>
<gene>
    <name evidence="1" type="primary">hemE</name>
    <name type="ordered locus">ECSE_4285</name>
</gene>
<keyword id="KW-0963">Cytoplasm</keyword>
<keyword id="KW-0210">Decarboxylase</keyword>
<keyword id="KW-0456">Lyase</keyword>
<keyword id="KW-0627">Porphyrin biosynthesis</keyword>
<evidence type="ECO:0000255" key="1">
    <source>
        <dbReference type="HAMAP-Rule" id="MF_00218"/>
    </source>
</evidence>